<reference key="1">
    <citation type="journal article" date="2005" name="Nature">
        <title>The genome of the social amoeba Dictyostelium discoideum.</title>
        <authorList>
            <person name="Eichinger L."/>
            <person name="Pachebat J.A."/>
            <person name="Gloeckner G."/>
            <person name="Rajandream M.A."/>
            <person name="Sucgang R."/>
            <person name="Berriman M."/>
            <person name="Song J."/>
            <person name="Olsen R."/>
            <person name="Szafranski K."/>
            <person name="Xu Q."/>
            <person name="Tunggal B."/>
            <person name="Kummerfeld S."/>
            <person name="Madera M."/>
            <person name="Konfortov B.A."/>
            <person name="Rivero F."/>
            <person name="Bankier A.T."/>
            <person name="Lehmann R."/>
            <person name="Hamlin N."/>
            <person name="Davies R."/>
            <person name="Gaudet P."/>
            <person name="Fey P."/>
            <person name="Pilcher K."/>
            <person name="Chen G."/>
            <person name="Saunders D."/>
            <person name="Sodergren E.J."/>
            <person name="Davis P."/>
            <person name="Kerhornou A."/>
            <person name="Nie X."/>
            <person name="Hall N."/>
            <person name="Anjard C."/>
            <person name="Hemphill L."/>
            <person name="Bason N."/>
            <person name="Farbrother P."/>
            <person name="Desany B."/>
            <person name="Just E."/>
            <person name="Morio T."/>
            <person name="Rost R."/>
            <person name="Churcher C.M."/>
            <person name="Cooper J."/>
            <person name="Haydock S."/>
            <person name="van Driessche N."/>
            <person name="Cronin A."/>
            <person name="Goodhead I."/>
            <person name="Muzny D.M."/>
            <person name="Mourier T."/>
            <person name="Pain A."/>
            <person name="Lu M."/>
            <person name="Harper D."/>
            <person name="Lindsay R."/>
            <person name="Hauser H."/>
            <person name="James K.D."/>
            <person name="Quiles M."/>
            <person name="Madan Babu M."/>
            <person name="Saito T."/>
            <person name="Buchrieser C."/>
            <person name="Wardroper A."/>
            <person name="Felder M."/>
            <person name="Thangavelu M."/>
            <person name="Johnson D."/>
            <person name="Knights A."/>
            <person name="Loulseged H."/>
            <person name="Mungall K.L."/>
            <person name="Oliver K."/>
            <person name="Price C."/>
            <person name="Quail M.A."/>
            <person name="Urushihara H."/>
            <person name="Hernandez J."/>
            <person name="Rabbinowitsch E."/>
            <person name="Steffen D."/>
            <person name="Sanders M."/>
            <person name="Ma J."/>
            <person name="Kohara Y."/>
            <person name="Sharp S."/>
            <person name="Simmonds M.N."/>
            <person name="Spiegler S."/>
            <person name="Tivey A."/>
            <person name="Sugano S."/>
            <person name="White B."/>
            <person name="Walker D."/>
            <person name="Woodward J.R."/>
            <person name="Winckler T."/>
            <person name="Tanaka Y."/>
            <person name="Shaulsky G."/>
            <person name="Schleicher M."/>
            <person name="Weinstock G.M."/>
            <person name="Rosenthal A."/>
            <person name="Cox E.C."/>
            <person name="Chisholm R.L."/>
            <person name="Gibbs R.A."/>
            <person name="Loomis W.F."/>
            <person name="Platzer M."/>
            <person name="Kay R.R."/>
            <person name="Williams J.G."/>
            <person name="Dear P.H."/>
            <person name="Noegel A.A."/>
            <person name="Barrell B.G."/>
            <person name="Kuspa A."/>
        </authorList>
    </citation>
    <scope>NUCLEOTIDE SEQUENCE [LARGE SCALE GENOMIC DNA]</scope>
    <source>
        <strain>AX4</strain>
    </source>
</reference>
<accession>Q54Q45</accession>
<name>MYBZ_DICDI</name>
<evidence type="ECO:0000255" key="1">
    <source>
        <dbReference type="PROSITE-ProRule" id="PRU00133"/>
    </source>
</evidence>
<evidence type="ECO:0000256" key="2">
    <source>
        <dbReference type="SAM" id="MobiDB-lite"/>
    </source>
</evidence>
<dbReference type="EMBL" id="AAFI02000063">
    <property type="protein sequence ID" value="EAL65392.1"/>
    <property type="molecule type" value="Genomic_DNA"/>
</dbReference>
<dbReference type="RefSeq" id="XP_638752.1">
    <property type="nucleotide sequence ID" value="XM_633660.1"/>
</dbReference>
<dbReference type="SMR" id="Q54Q45"/>
<dbReference type="FunCoup" id="Q54Q45">
    <property type="interactions" value="141"/>
</dbReference>
<dbReference type="STRING" id="44689.Q54Q45"/>
<dbReference type="PaxDb" id="44689-DDB0220509"/>
<dbReference type="EnsemblProtists" id="EAL65392">
    <property type="protein sequence ID" value="EAL65392"/>
    <property type="gene ID" value="DDB_G0284103"/>
</dbReference>
<dbReference type="GeneID" id="8624422"/>
<dbReference type="KEGG" id="ddi:DDB_G0284103"/>
<dbReference type="dictyBase" id="DDB_G0284103">
    <property type="gene designation" value="mybZ"/>
</dbReference>
<dbReference type="VEuPathDB" id="AmoebaDB:DDB_G0284103"/>
<dbReference type="eggNOG" id="ENOG502SYM3">
    <property type="taxonomic scope" value="Eukaryota"/>
</dbReference>
<dbReference type="HOGENOM" id="CLU_381502_0_0_1"/>
<dbReference type="InParanoid" id="Q54Q45"/>
<dbReference type="OMA" id="RLMNKWS"/>
<dbReference type="PRO" id="PR:Q54Q45"/>
<dbReference type="Proteomes" id="UP000002195">
    <property type="component" value="Chromosome 4"/>
</dbReference>
<dbReference type="InterPro" id="IPR009057">
    <property type="entry name" value="Homeodomain-like_sf"/>
</dbReference>
<dbReference type="InterPro" id="IPR001005">
    <property type="entry name" value="SANT/Myb"/>
</dbReference>
<dbReference type="PANTHER" id="PTHR36911:SF3">
    <property type="entry name" value="GATA ZINC FINGER DOMAIN-CONTAINING PROTEIN 4-RELATED"/>
    <property type="match status" value="1"/>
</dbReference>
<dbReference type="PANTHER" id="PTHR36911">
    <property type="entry name" value="LIM ZINC-BINDING DOMAIN-CONTAINING PROTEIN-RELATED"/>
    <property type="match status" value="1"/>
</dbReference>
<dbReference type="SUPFAM" id="SSF46689">
    <property type="entry name" value="Homeodomain-like"/>
    <property type="match status" value="1"/>
</dbReference>
<dbReference type="PROSITE" id="PS50090">
    <property type="entry name" value="MYB_LIKE"/>
    <property type="match status" value="1"/>
</dbReference>
<sequence>MIVLDRMKISFMLEDSNDNNNNNNNNNNSNNNNNNNNNNGYCDDSSATSSPTGQDSTIDRPNSPSSSIKFTYPSKNSIVTSPSSLQLPSPSFSSSSSSSSSSSSSSLSNKDLMEDGVILLSKIASPSKSSENSPTIHTSSLSPNSYHPYQKYQKPKLHVDHYVSNNNNNNNNNNNNNKKSDYSSELYNTSPSISSKTTPNGSSTNNSPFLSPRQPLFDHSNNNNNNNNDRNENNTTKQQQQLNQLNQLNNNLNSVNNSLFDYNGNSQELQQLIPSSPTRSPSGGSGSESEENDGESSPNNMRSLACNKHSKWKKKCPESCTGRLSPVEIPIATRKLWSQEECCRLLEMVFQRDPQSVTSKESELRWRSIASTLGRTVTSTRKKYMRLMNKWSPRPHCVHPISKLIDQNEKLLLLQTSTEAQQQVQQQQINLQQFYQASQQMTQNLPPQQQQYHQQQMNQQQQLSQQLSQQLTQYKQFQQQQQQNNQQFQQHLQLQQQQLAAQAQVQHQQAQQNLQKQIQQQQKQKPQNGNTQQNNKLKNQNQNQNQNQNQNQNQNQNQNQNYNQNHNQNQNQNYNQQGSNQYLSSISSYSNNNNNNNNNNNSSNNNNNYYNNNNNNNNNNNSNNNSYYNNNNGNNNNGNNYNNNYRSSLSPPHSPHESDRQSPQQKSNNENQQNFPKFRKPIGRPAQSCEAHRNEHQKCPPLCPNRPENLNNNNNNNNNNYNNYHN</sequence>
<protein>
    <recommendedName>
        <fullName>Myb-like protein Z</fullName>
    </recommendedName>
</protein>
<gene>
    <name type="primary">mybZ</name>
    <name type="ORF">DDB_G0284103</name>
</gene>
<organism>
    <name type="scientific">Dictyostelium discoideum</name>
    <name type="common">Social amoeba</name>
    <dbReference type="NCBI Taxonomy" id="44689"/>
    <lineage>
        <taxon>Eukaryota</taxon>
        <taxon>Amoebozoa</taxon>
        <taxon>Evosea</taxon>
        <taxon>Eumycetozoa</taxon>
        <taxon>Dictyostelia</taxon>
        <taxon>Dictyosteliales</taxon>
        <taxon>Dictyosteliaceae</taxon>
        <taxon>Dictyostelium</taxon>
    </lineage>
</organism>
<feature type="chain" id="PRO_0000329398" description="Myb-like protein Z">
    <location>
        <begin position="1"/>
        <end position="726"/>
    </location>
</feature>
<feature type="domain" description="Myb-like" evidence="1">
    <location>
        <begin position="329"/>
        <end position="388"/>
    </location>
</feature>
<feature type="region of interest" description="Disordered" evidence="2">
    <location>
        <begin position="15"/>
        <end position="109"/>
    </location>
</feature>
<feature type="region of interest" description="Disordered" evidence="2">
    <location>
        <begin position="124"/>
        <end position="149"/>
    </location>
</feature>
<feature type="region of interest" description="Disordered" evidence="2">
    <location>
        <begin position="161"/>
        <end position="239"/>
    </location>
</feature>
<feature type="region of interest" description="Disordered" evidence="2">
    <location>
        <begin position="272"/>
        <end position="303"/>
    </location>
</feature>
<feature type="region of interest" description="Disordered" evidence="2">
    <location>
        <begin position="516"/>
        <end position="726"/>
    </location>
</feature>
<feature type="compositionally biased region" description="Low complexity" evidence="2">
    <location>
        <begin position="18"/>
        <end position="39"/>
    </location>
</feature>
<feature type="compositionally biased region" description="Polar residues" evidence="2">
    <location>
        <begin position="45"/>
        <end position="80"/>
    </location>
</feature>
<feature type="compositionally biased region" description="Low complexity" evidence="2">
    <location>
        <begin position="81"/>
        <end position="108"/>
    </location>
</feature>
<feature type="compositionally biased region" description="Polar residues" evidence="2">
    <location>
        <begin position="124"/>
        <end position="147"/>
    </location>
</feature>
<feature type="compositionally biased region" description="Low complexity" evidence="2">
    <location>
        <begin position="165"/>
        <end position="177"/>
    </location>
</feature>
<feature type="compositionally biased region" description="Polar residues" evidence="2">
    <location>
        <begin position="183"/>
        <end position="209"/>
    </location>
</feature>
<feature type="compositionally biased region" description="Low complexity" evidence="2">
    <location>
        <begin position="221"/>
        <end position="239"/>
    </location>
</feature>
<feature type="compositionally biased region" description="Low complexity" evidence="2">
    <location>
        <begin position="516"/>
        <end position="651"/>
    </location>
</feature>
<feature type="compositionally biased region" description="Polar residues" evidence="2">
    <location>
        <begin position="661"/>
        <end position="675"/>
    </location>
</feature>
<feature type="compositionally biased region" description="Low complexity" evidence="2">
    <location>
        <begin position="709"/>
        <end position="726"/>
    </location>
</feature>
<keyword id="KW-1185">Reference proteome</keyword>
<proteinExistence type="predicted"/>